<feature type="chain" id="PRO_1000143811" description="Large ribosomal subunit protein bL21">
    <location>
        <begin position="1"/>
        <end position="103"/>
    </location>
</feature>
<organism>
    <name type="scientific">Klebsiella pneumoniae (strain 342)</name>
    <dbReference type="NCBI Taxonomy" id="507522"/>
    <lineage>
        <taxon>Bacteria</taxon>
        <taxon>Pseudomonadati</taxon>
        <taxon>Pseudomonadota</taxon>
        <taxon>Gammaproteobacteria</taxon>
        <taxon>Enterobacterales</taxon>
        <taxon>Enterobacteriaceae</taxon>
        <taxon>Klebsiella/Raoultella group</taxon>
        <taxon>Klebsiella</taxon>
        <taxon>Klebsiella pneumoniae complex</taxon>
    </lineage>
</organism>
<protein>
    <recommendedName>
        <fullName evidence="1">Large ribosomal subunit protein bL21</fullName>
    </recommendedName>
    <alternativeName>
        <fullName evidence="2">50S ribosomal protein L21</fullName>
    </alternativeName>
</protein>
<evidence type="ECO:0000255" key="1">
    <source>
        <dbReference type="HAMAP-Rule" id="MF_01363"/>
    </source>
</evidence>
<evidence type="ECO:0000305" key="2"/>
<reference key="1">
    <citation type="journal article" date="2008" name="PLoS Genet.">
        <title>Complete genome sequence of the N2-fixing broad host range endophyte Klebsiella pneumoniae 342 and virulence predictions verified in mice.</title>
        <authorList>
            <person name="Fouts D.E."/>
            <person name="Tyler H.L."/>
            <person name="DeBoy R.T."/>
            <person name="Daugherty S."/>
            <person name="Ren Q."/>
            <person name="Badger J.H."/>
            <person name="Durkin A.S."/>
            <person name="Huot H."/>
            <person name="Shrivastava S."/>
            <person name="Kothari S."/>
            <person name="Dodson R.J."/>
            <person name="Mohamoud Y."/>
            <person name="Khouri H."/>
            <person name="Roesch L.F.W."/>
            <person name="Krogfelt K.A."/>
            <person name="Struve C."/>
            <person name="Triplett E.W."/>
            <person name="Methe B.A."/>
        </authorList>
    </citation>
    <scope>NUCLEOTIDE SEQUENCE [LARGE SCALE GENOMIC DNA]</scope>
    <source>
        <strain>342</strain>
    </source>
</reference>
<sequence>MYAVFQSGGKQHRVSEGQTVRLEKLDIATGEAVEFAEVLMIANGEEIKIGVPFVEGGVIKAEVVAHGRGEKVKIVKFRRRKHYRKQQGHRQWFTDVKITGISA</sequence>
<keyword id="KW-0687">Ribonucleoprotein</keyword>
<keyword id="KW-0689">Ribosomal protein</keyword>
<keyword id="KW-0694">RNA-binding</keyword>
<keyword id="KW-0699">rRNA-binding</keyword>
<gene>
    <name evidence="1" type="primary">rplU</name>
    <name type="ordered locus">KPK_0525</name>
</gene>
<name>RL21_KLEP3</name>
<proteinExistence type="inferred from homology"/>
<comment type="function">
    <text evidence="1">This protein binds to 23S rRNA in the presence of protein L20.</text>
</comment>
<comment type="subunit">
    <text evidence="1">Part of the 50S ribosomal subunit. Contacts protein L20.</text>
</comment>
<comment type="similarity">
    <text evidence="1">Belongs to the bacterial ribosomal protein bL21 family.</text>
</comment>
<dbReference type="EMBL" id="CP000964">
    <property type="protein sequence ID" value="ACI10176.1"/>
    <property type="molecule type" value="Genomic_DNA"/>
</dbReference>
<dbReference type="SMR" id="B5XSV5"/>
<dbReference type="KEGG" id="kpe:KPK_0525"/>
<dbReference type="HOGENOM" id="CLU_061463_3_3_6"/>
<dbReference type="Proteomes" id="UP000001734">
    <property type="component" value="Chromosome"/>
</dbReference>
<dbReference type="GO" id="GO:0005737">
    <property type="term" value="C:cytoplasm"/>
    <property type="evidence" value="ECO:0007669"/>
    <property type="project" value="UniProtKB-ARBA"/>
</dbReference>
<dbReference type="GO" id="GO:1990904">
    <property type="term" value="C:ribonucleoprotein complex"/>
    <property type="evidence" value="ECO:0007669"/>
    <property type="project" value="UniProtKB-KW"/>
</dbReference>
<dbReference type="GO" id="GO:0005840">
    <property type="term" value="C:ribosome"/>
    <property type="evidence" value="ECO:0007669"/>
    <property type="project" value="UniProtKB-KW"/>
</dbReference>
<dbReference type="GO" id="GO:0019843">
    <property type="term" value="F:rRNA binding"/>
    <property type="evidence" value="ECO:0007669"/>
    <property type="project" value="UniProtKB-UniRule"/>
</dbReference>
<dbReference type="GO" id="GO:0003735">
    <property type="term" value="F:structural constituent of ribosome"/>
    <property type="evidence" value="ECO:0007669"/>
    <property type="project" value="InterPro"/>
</dbReference>
<dbReference type="GO" id="GO:0006412">
    <property type="term" value="P:translation"/>
    <property type="evidence" value="ECO:0007669"/>
    <property type="project" value="UniProtKB-UniRule"/>
</dbReference>
<dbReference type="HAMAP" id="MF_01363">
    <property type="entry name" value="Ribosomal_bL21"/>
    <property type="match status" value="1"/>
</dbReference>
<dbReference type="InterPro" id="IPR028909">
    <property type="entry name" value="bL21-like"/>
</dbReference>
<dbReference type="InterPro" id="IPR036164">
    <property type="entry name" value="bL21-like_sf"/>
</dbReference>
<dbReference type="InterPro" id="IPR001787">
    <property type="entry name" value="Ribosomal_bL21"/>
</dbReference>
<dbReference type="InterPro" id="IPR018258">
    <property type="entry name" value="Ribosomal_bL21_CS"/>
</dbReference>
<dbReference type="NCBIfam" id="TIGR00061">
    <property type="entry name" value="L21"/>
    <property type="match status" value="1"/>
</dbReference>
<dbReference type="PANTHER" id="PTHR21349">
    <property type="entry name" value="50S RIBOSOMAL PROTEIN L21"/>
    <property type="match status" value="1"/>
</dbReference>
<dbReference type="PANTHER" id="PTHR21349:SF0">
    <property type="entry name" value="LARGE RIBOSOMAL SUBUNIT PROTEIN BL21M"/>
    <property type="match status" value="1"/>
</dbReference>
<dbReference type="Pfam" id="PF00829">
    <property type="entry name" value="Ribosomal_L21p"/>
    <property type="match status" value="1"/>
</dbReference>
<dbReference type="SUPFAM" id="SSF141091">
    <property type="entry name" value="L21p-like"/>
    <property type="match status" value="1"/>
</dbReference>
<dbReference type="PROSITE" id="PS01169">
    <property type="entry name" value="RIBOSOMAL_L21"/>
    <property type="match status" value="1"/>
</dbReference>
<accession>B5XSV5</accession>